<organism>
    <name type="scientific">Porphyromonas gingivalis (strain ATCC 33277 / DSM 20709 / CIP 103683 / JCM 12257 / NCTC 11834 / 2561)</name>
    <dbReference type="NCBI Taxonomy" id="431947"/>
    <lineage>
        <taxon>Bacteria</taxon>
        <taxon>Pseudomonadati</taxon>
        <taxon>Bacteroidota</taxon>
        <taxon>Bacteroidia</taxon>
        <taxon>Bacteroidales</taxon>
        <taxon>Porphyromonadaceae</taxon>
        <taxon>Porphyromonas</taxon>
    </lineage>
</organism>
<sequence length="743" mass="82228">MLNVVSKTIDLGDGRSIKIETGKLAKQADGAVTVTMGNTVLLATVCAAKDANPGCDFMPLQVEYKEKYSAIGRFPGGFTRREGKASDYEILTCRLVDRALRPLFPDNYHAEVFVNVILFSADGEDMPDALAGLAASAALAVSDIPFNGPISEVRVARVDGRYIVNPTFEQLERADIDLMVGATMDNIMMVEGEMDEVQESEMLEGIRVAHEAIKVQCKAQLELSEAVGKLQKREYSHEVNDEDLRKKVHDECYARAYEVATSGTGKHERGEAFEKIVEEFKAQYTEEELAEKAEMIARYYHDVEKEAMRRAILDEGKRLDGRKATEIRPIWIETDCLPGPHGSAIFTRGETQSLTTVTLGTKSDEKLVDDVLNYTKERFLLHYNFPPFSTGEARPQRGVGRREIGHGNLAHRALKRMIPTDYPYVVRVISDILESNGSSSMATVCAGTLALRDAGVQIRKPVSGIAMGLISENQGKNYAILSDILGDEDHLGDMDFKVTGTKDGITATQMDIKVDGLSYEILENALEQAKQGRLHILGKIMEAQPETRDDLKPHAPRIEKMHIGKEFIGAVIGPGGKIIQGIQEKSGATVNIEEVDGMGVIEISGTNKPCIDAAIGMIKGIVAMPEVGETYPGKITSVMPYGCFVEFLPGKEGLLHISEVDWKRFETIEDTNLKEGESINVKLLDIDPKTGKFKLSRKVLLEKPEGYVEPQPRERRERREGGREGGRNFERRGGDRDHREPRG</sequence>
<accession>B2RIW6</accession>
<comment type="function">
    <text evidence="1">Involved in mRNA degradation. Catalyzes the phosphorolysis of single-stranded polyribonucleotides processively in the 3'- to 5'-direction.</text>
</comment>
<comment type="catalytic activity">
    <reaction evidence="1">
        <text>RNA(n+1) + phosphate = RNA(n) + a ribonucleoside 5'-diphosphate</text>
        <dbReference type="Rhea" id="RHEA:22096"/>
        <dbReference type="Rhea" id="RHEA-COMP:14527"/>
        <dbReference type="Rhea" id="RHEA-COMP:17342"/>
        <dbReference type="ChEBI" id="CHEBI:43474"/>
        <dbReference type="ChEBI" id="CHEBI:57930"/>
        <dbReference type="ChEBI" id="CHEBI:140395"/>
        <dbReference type="EC" id="2.7.7.8"/>
    </reaction>
</comment>
<comment type="cofactor">
    <cofactor evidence="1">
        <name>Mg(2+)</name>
        <dbReference type="ChEBI" id="CHEBI:18420"/>
    </cofactor>
</comment>
<comment type="subcellular location">
    <subcellularLocation>
        <location evidence="1">Cytoplasm</location>
    </subcellularLocation>
</comment>
<comment type="similarity">
    <text evidence="1">Belongs to the polyribonucleotide nucleotidyltransferase family.</text>
</comment>
<comment type="sequence caution" evidence="3">
    <conflict type="erroneous initiation">
        <sequence resource="EMBL-CDS" id="BAG33311"/>
    </conflict>
</comment>
<proteinExistence type="inferred from homology"/>
<reference key="1">
    <citation type="journal article" date="2008" name="DNA Res.">
        <title>Determination of the genome sequence of Porphyromonas gingivalis strain ATCC 33277 and genomic comparison with strain W83 revealed extensive genome rearrangements in P. gingivalis.</title>
        <authorList>
            <person name="Naito M."/>
            <person name="Hirakawa H."/>
            <person name="Yamashita A."/>
            <person name="Ohara N."/>
            <person name="Shoji M."/>
            <person name="Yukitake H."/>
            <person name="Nakayama K."/>
            <person name="Toh H."/>
            <person name="Yoshimura F."/>
            <person name="Kuhara S."/>
            <person name="Hattori M."/>
            <person name="Hayashi T."/>
            <person name="Nakayama K."/>
        </authorList>
    </citation>
    <scope>NUCLEOTIDE SEQUENCE [LARGE SCALE GENOMIC DNA]</scope>
    <source>
        <strain>ATCC 33277 / DSM 20709 / CIP 103683 / JCM 12257 / NCTC 11834 / 2561</strain>
    </source>
</reference>
<name>PNP_PORG3</name>
<feature type="chain" id="PRO_0000381911" description="Polyribonucleotide nucleotidyltransferase">
    <location>
        <begin position="1"/>
        <end position="743"/>
    </location>
</feature>
<feature type="domain" description="KH" evidence="1">
    <location>
        <begin position="556"/>
        <end position="618"/>
    </location>
</feature>
<feature type="domain" description="S1 motif" evidence="1">
    <location>
        <begin position="628"/>
        <end position="698"/>
    </location>
</feature>
<feature type="region of interest" description="Disordered" evidence="2">
    <location>
        <begin position="704"/>
        <end position="743"/>
    </location>
</feature>
<feature type="binding site" evidence="1">
    <location>
        <position position="489"/>
    </location>
    <ligand>
        <name>Mg(2+)</name>
        <dbReference type="ChEBI" id="CHEBI:18420"/>
    </ligand>
</feature>
<feature type="binding site" evidence="1">
    <location>
        <position position="495"/>
    </location>
    <ligand>
        <name>Mg(2+)</name>
        <dbReference type="ChEBI" id="CHEBI:18420"/>
    </ligand>
</feature>
<protein>
    <recommendedName>
        <fullName evidence="1">Polyribonucleotide nucleotidyltransferase</fullName>
        <ecNumber evidence="1">2.7.7.8</ecNumber>
    </recommendedName>
    <alternativeName>
        <fullName evidence="1">Polynucleotide phosphorylase</fullName>
        <shortName evidence="1">PNPase</shortName>
    </alternativeName>
</protein>
<dbReference type="EC" id="2.7.7.8" evidence="1"/>
<dbReference type="EMBL" id="AP009380">
    <property type="protein sequence ID" value="BAG33311.1"/>
    <property type="status" value="ALT_INIT"/>
    <property type="molecule type" value="Genomic_DNA"/>
</dbReference>
<dbReference type="RefSeq" id="WP_039417263.1">
    <property type="nucleotide sequence ID" value="NC_010729.1"/>
</dbReference>
<dbReference type="SMR" id="B2RIW6"/>
<dbReference type="GeneID" id="29256011"/>
<dbReference type="KEGG" id="pgn:PGN_0792"/>
<dbReference type="eggNOG" id="COG1185">
    <property type="taxonomic scope" value="Bacteria"/>
</dbReference>
<dbReference type="HOGENOM" id="CLU_004217_2_2_10"/>
<dbReference type="OrthoDB" id="9804305at2"/>
<dbReference type="BioCyc" id="PGIN431947:G1G2V-870-MONOMER"/>
<dbReference type="Proteomes" id="UP000008842">
    <property type="component" value="Chromosome"/>
</dbReference>
<dbReference type="GO" id="GO:0005829">
    <property type="term" value="C:cytosol"/>
    <property type="evidence" value="ECO:0007669"/>
    <property type="project" value="TreeGrafter"/>
</dbReference>
<dbReference type="GO" id="GO:0000175">
    <property type="term" value="F:3'-5'-RNA exonuclease activity"/>
    <property type="evidence" value="ECO:0007669"/>
    <property type="project" value="TreeGrafter"/>
</dbReference>
<dbReference type="GO" id="GO:0000287">
    <property type="term" value="F:magnesium ion binding"/>
    <property type="evidence" value="ECO:0007669"/>
    <property type="project" value="UniProtKB-UniRule"/>
</dbReference>
<dbReference type="GO" id="GO:0004654">
    <property type="term" value="F:polyribonucleotide nucleotidyltransferase activity"/>
    <property type="evidence" value="ECO:0007669"/>
    <property type="project" value="UniProtKB-UniRule"/>
</dbReference>
<dbReference type="GO" id="GO:0003723">
    <property type="term" value="F:RNA binding"/>
    <property type="evidence" value="ECO:0007669"/>
    <property type="project" value="UniProtKB-UniRule"/>
</dbReference>
<dbReference type="GO" id="GO:0006402">
    <property type="term" value="P:mRNA catabolic process"/>
    <property type="evidence" value="ECO:0007669"/>
    <property type="project" value="UniProtKB-UniRule"/>
</dbReference>
<dbReference type="GO" id="GO:0006396">
    <property type="term" value="P:RNA processing"/>
    <property type="evidence" value="ECO:0007669"/>
    <property type="project" value="InterPro"/>
</dbReference>
<dbReference type="CDD" id="cd02393">
    <property type="entry name" value="KH-I_PNPase"/>
    <property type="match status" value="1"/>
</dbReference>
<dbReference type="CDD" id="cd11363">
    <property type="entry name" value="RNase_PH_PNPase_1"/>
    <property type="match status" value="1"/>
</dbReference>
<dbReference type="CDD" id="cd11364">
    <property type="entry name" value="RNase_PH_PNPase_2"/>
    <property type="match status" value="1"/>
</dbReference>
<dbReference type="FunFam" id="3.30.1370.10:FF:000001">
    <property type="entry name" value="Polyribonucleotide nucleotidyltransferase"/>
    <property type="match status" value="1"/>
</dbReference>
<dbReference type="FunFam" id="3.30.230.70:FF:000001">
    <property type="entry name" value="Polyribonucleotide nucleotidyltransferase"/>
    <property type="match status" value="1"/>
</dbReference>
<dbReference type="FunFam" id="3.30.230.70:FF:000002">
    <property type="entry name" value="Polyribonucleotide nucleotidyltransferase"/>
    <property type="match status" value="1"/>
</dbReference>
<dbReference type="Gene3D" id="3.30.230.70">
    <property type="entry name" value="GHMP Kinase, N-terminal domain"/>
    <property type="match status" value="2"/>
</dbReference>
<dbReference type="Gene3D" id="3.30.1370.10">
    <property type="entry name" value="K Homology domain, type 1"/>
    <property type="match status" value="1"/>
</dbReference>
<dbReference type="Gene3D" id="2.40.50.140">
    <property type="entry name" value="Nucleic acid-binding proteins"/>
    <property type="match status" value="1"/>
</dbReference>
<dbReference type="HAMAP" id="MF_01595">
    <property type="entry name" value="PNPase"/>
    <property type="match status" value="1"/>
</dbReference>
<dbReference type="InterPro" id="IPR001247">
    <property type="entry name" value="ExoRNase_PH_dom1"/>
</dbReference>
<dbReference type="InterPro" id="IPR015847">
    <property type="entry name" value="ExoRNase_PH_dom2"/>
</dbReference>
<dbReference type="InterPro" id="IPR036345">
    <property type="entry name" value="ExoRNase_PH_dom2_sf"/>
</dbReference>
<dbReference type="InterPro" id="IPR004087">
    <property type="entry name" value="KH_dom"/>
</dbReference>
<dbReference type="InterPro" id="IPR004088">
    <property type="entry name" value="KH_dom_type_1"/>
</dbReference>
<dbReference type="InterPro" id="IPR036612">
    <property type="entry name" value="KH_dom_type_1_sf"/>
</dbReference>
<dbReference type="InterPro" id="IPR012340">
    <property type="entry name" value="NA-bd_OB-fold"/>
</dbReference>
<dbReference type="InterPro" id="IPR012162">
    <property type="entry name" value="PNPase"/>
</dbReference>
<dbReference type="InterPro" id="IPR027408">
    <property type="entry name" value="PNPase/RNase_PH_dom_sf"/>
</dbReference>
<dbReference type="InterPro" id="IPR015848">
    <property type="entry name" value="PNPase_PH_RNA-bd_bac/org-type"/>
</dbReference>
<dbReference type="InterPro" id="IPR020568">
    <property type="entry name" value="Ribosomal_Su5_D2-typ_SF"/>
</dbReference>
<dbReference type="InterPro" id="IPR003029">
    <property type="entry name" value="S1_domain"/>
</dbReference>
<dbReference type="NCBIfam" id="TIGR03591">
    <property type="entry name" value="polynuc_phos"/>
    <property type="match status" value="1"/>
</dbReference>
<dbReference type="NCBIfam" id="NF008805">
    <property type="entry name" value="PRK11824.1"/>
    <property type="match status" value="1"/>
</dbReference>
<dbReference type="PANTHER" id="PTHR11252">
    <property type="entry name" value="POLYRIBONUCLEOTIDE NUCLEOTIDYLTRANSFERASE"/>
    <property type="match status" value="1"/>
</dbReference>
<dbReference type="PANTHER" id="PTHR11252:SF0">
    <property type="entry name" value="POLYRIBONUCLEOTIDE NUCLEOTIDYLTRANSFERASE 1, MITOCHONDRIAL"/>
    <property type="match status" value="1"/>
</dbReference>
<dbReference type="Pfam" id="PF00013">
    <property type="entry name" value="KH_1"/>
    <property type="match status" value="1"/>
</dbReference>
<dbReference type="Pfam" id="PF03726">
    <property type="entry name" value="PNPase"/>
    <property type="match status" value="1"/>
</dbReference>
<dbReference type="Pfam" id="PF01138">
    <property type="entry name" value="RNase_PH"/>
    <property type="match status" value="2"/>
</dbReference>
<dbReference type="Pfam" id="PF03725">
    <property type="entry name" value="RNase_PH_C"/>
    <property type="match status" value="2"/>
</dbReference>
<dbReference type="Pfam" id="PF00575">
    <property type="entry name" value="S1"/>
    <property type="match status" value="1"/>
</dbReference>
<dbReference type="PIRSF" id="PIRSF005499">
    <property type="entry name" value="PNPase"/>
    <property type="match status" value="1"/>
</dbReference>
<dbReference type="SMART" id="SM00322">
    <property type="entry name" value="KH"/>
    <property type="match status" value="1"/>
</dbReference>
<dbReference type="SMART" id="SM00316">
    <property type="entry name" value="S1"/>
    <property type="match status" value="1"/>
</dbReference>
<dbReference type="SUPFAM" id="SSF54791">
    <property type="entry name" value="Eukaryotic type KH-domain (KH-domain type I)"/>
    <property type="match status" value="1"/>
</dbReference>
<dbReference type="SUPFAM" id="SSF50249">
    <property type="entry name" value="Nucleic acid-binding proteins"/>
    <property type="match status" value="1"/>
</dbReference>
<dbReference type="SUPFAM" id="SSF55666">
    <property type="entry name" value="Ribonuclease PH domain 2-like"/>
    <property type="match status" value="2"/>
</dbReference>
<dbReference type="SUPFAM" id="SSF54211">
    <property type="entry name" value="Ribosomal protein S5 domain 2-like"/>
    <property type="match status" value="2"/>
</dbReference>
<dbReference type="PROSITE" id="PS50084">
    <property type="entry name" value="KH_TYPE_1"/>
    <property type="match status" value="1"/>
</dbReference>
<dbReference type="PROSITE" id="PS50126">
    <property type="entry name" value="S1"/>
    <property type="match status" value="1"/>
</dbReference>
<keyword id="KW-0963">Cytoplasm</keyword>
<keyword id="KW-0460">Magnesium</keyword>
<keyword id="KW-0479">Metal-binding</keyword>
<keyword id="KW-0548">Nucleotidyltransferase</keyword>
<keyword id="KW-0694">RNA-binding</keyword>
<keyword id="KW-0808">Transferase</keyword>
<evidence type="ECO:0000255" key="1">
    <source>
        <dbReference type="HAMAP-Rule" id="MF_01595"/>
    </source>
</evidence>
<evidence type="ECO:0000256" key="2">
    <source>
        <dbReference type="SAM" id="MobiDB-lite"/>
    </source>
</evidence>
<evidence type="ECO:0000305" key="3"/>
<gene>
    <name evidence="1" type="primary">pnp</name>
    <name type="ordered locus">PGN_0792</name>
</gene>